<sequence length="3258" mass="363390">MVKRKSSEGQEQDGGRGIPLPIQTFLWRQTSAFLRPKLGKQYEASCVSFERVLVENKLHGLSPALSEAIQSISRWELVQAALPHVLHCTATLLSNRNKLGHQDKLGVAETKLLHTLHWMLLEAPQDCNNERFGGTDRGSSWGGSSSAFIHQVENQGSPGQPCQSSSNDEEENNRRKIFQNSMATVELFVFLFAPLVHRIKESDLTFRLASGLVIWQPMWEHRQPGVSGFTALVKPIRNIITAKRSSPINSQSRTCESPNQDARHLEGLQVVCETFQSDSISPKATISGCHRGNSFDGSLSSQTSQERGPSHSRASLVIPPCQRSRYATYFDVAVLRCLLQPHWSEEGTQWSLMYYLQRLRHMLEEKPEKPPEPDIPLLPRPRSSSMVAAAPSLVNTHKTQDLTMKCNEEEKSLSSEAFSKVSLTNLRRSAVPDLSSDLGMNIFKKFKSRKEDRERKGSIPFHHTGKRRPRRMGVPFLLHEDHLDVSPTRSTFSFGSFSGLGEDRRGIEKGGWQTTILGKLTRRGSSDAATEMESLSARHSHSHHTLVSDLPDPSNSHGENTVKEVRSQISTITVATFNTTLASFNVGYADFFNEHMRKLCNQVPIPEMPHEPLACANLPRSLTDSCINYSYLEDTEHIDGTNNFVHKNGMLDLSVVLKAVYLVLNHDISSRICDVALNIVECLLQLGVVPCVEKNRKKSENKENETLEKRPSEGAFQFKGVSGSSTCGFGGPAVSGAGDGGGEEGGGGDGGGGGGDGGGGGGGGGGPYEKNDKNQEKDESTPVSNHRLALTMLIKIVKSLGCAYGCGEGHRGLSGDRLRHQVFRENAQNCLTKLYKLDKMQFRQTMRDYVNKDSLNNVVDFLHALLGFCMEPVTDNKAGFGNNFTTVDNKSTAQNVEGIIVSAMFKSLITRCASTTHELHSPENLGLYCDIRQLVQFIKEAHGNVFRRVALSALLDSAEKLAPGKKVEENEQESKPAGSKRSEAGSIVDKGQVSSAPEECRSFMSGRPSQTPEHDEQMQGANLGRKDFWRKMFKSQSAASDTSSQSEQDTSECTTAHSGTTSDRRARSRSRRISLRKKLKLPIGKRNWLKRSSLSGLADGVEDLLDISSVDRLSFIRQSSKVKFTSAVKLSEGGPGSGMENGRDEEENFFKRLGCHSFDDHLSPNQDGGKSKNVVNLGAIRQGMKRFQFLLNCCEPGTIPDASILAAALDLEAPVVARAALFLECARFVHRCNRGNWPEWMKGHHVNITKKGLSRGRSPIVGNKRNQKLQWNAAKLFYQWGDAIGVRLNELCHGESESPANLLGLIYDEETKRRLRKEDEEEDFLDDSTVNPSKCGCPFALKMAACQLLLEITTFLRETFSCLPRPRTEPLVDLESCRLRLDPELDRHRYERKISFAGVLDENEDSKDSLHSSSHTLKSDAGVEEKKEGSPWSASEPSIEPEGMSNAGAEENYHRNMSWLHVMILLCNQQSFICTHVDYCHPHCYLHHSRSCARLVRAIKLLYGDSVDSLRESSNISSVALRGKKQKECSDKSCLRTPSLKKRVSDANLEGKKDSGMLKYIRLQVMSLSPAPLSLLIKAAPILTEEMYGDIQPAAWELLLSMDEHMAGAAAAMFLLCAVKVPEAVSDMLMSEFHHPETVQRLNAVLKFHTLWRFRYQVWPRMEEGAQQIFKIPPPSINFTLPSPVLGMPSVPMFDPPWVPQCSGSVQDPINEDQSKSFSARAVSRSHQRAEHILKNLQQEEEKKRLGREASLITAIPITQEACYEPTCTPNSEPEEEVEEVTNLASRRLSVSPSCTSSTSHRNYSFRRGSVWSVRSAVSAEDEEHTTEHTPNHHVPQPPQAVFPACICAAVLPIVHLMEDGEVREDGVAVSAVAQQVLWNCLIEDPSTVLRHFLEKLTISNRQDELMYMLRKLLLNIGDFPAQTSHILFNYLVGLIMYFVRTPCEWGMDAISATLTFLWEVVGYVEGLFFKDLKQTMKKEQCEVKLLVTASMPGTKTLVVHGQNECDIPTQLPVHEDTQFEALLKECLEFFNIPESQSTHYFLMDKRWNLIHYNKTYVRDIYPFRRSVSPQLNLVHMHPEKGQELIQKQVFTRKLEEVGRVLFLISLTQKIPTAHKQSHVSMLQEDLLRLPSFPRSAIDAEFSLFSDPQAGKELFGLDTLQKSLWIQLLEEMFLGMPSEFPWGDEIMLFLNVFNGALILHPEDSALLRQYAATVINTAVHFNHLFSLSGYQWILPTMLQVYSDYESNPQLRQAIEFACHQFYILHRKPFVLQLFASVAPLLEFPDAANNGPSKGVSAQCLFDLLQSLEGETTDILDILELVKAEKPLKSLDFCYGNEDLTFSISEAIKLCVTVVAYAPESFRSLQMLMVLEALVPCYLQKLKRQTSQVETVPAAREEIAATAALATSLQALLYSVEVLTRPMTAPQMSRCDQGHKGTTTANHTMSSGVNTRYQEQGAKLHFIRENLHLLEEGQGIPREELDERIAREEFRRPRESLLNICTEFYKHCGPRLKILQNLAGEPRVIALELLDVKSHMRLAEIAHSLLKLAPYDTQTMESRGLRRYIMEMLPITDWTAEAVRPALILILKRLDRMFNKIHKMPTLRRQVEWEPASNLIEGVCLTLQRQPIISFLPHLRSLINVCVNLVMGVVGPSSVADGLPLLHLSPYLSPPLPFSTAVVRLVALQIQALKEDFPLSHVISPFTNQERREGMLLNLLIPFVLTVGSGSKDSPWLEQPEVQLLLQTVINVLLPPRIISTSRSKNFMLESSPAHCSTPGDAGKDLRREGLAESTSQAAYLALKVILVCFERQLGSQWYWLSLQVKEMALRKVGGLALWDFLDFIVRTRIPIFVLLRPFIQCKLLAQPAENHEELSARQHIADQLERRFIPRPLCKSSLIAEFNSELKILKEAVHSGSAYQGKTSISTVGTSTSAYRLSLATMSRSNTGTGTVWEQDSEPSQQASQDTLSRTDEEDEENDSISMPSVVSEQEAYLLSAIGRRRFSSHVSSMSVPQAEVGMLPSQSEPNVLDDSQGLAAEGSLSRVASIQSEPGQQNLLVQQPLGRKRGLRQLRRPLLSRQKTQTEPRNRQGARLSTTRRSIQPKTKPSADQKRSVTFIEAQPEPAAAPTDALPATGQLQGCSPAPSRKPEAMDEPVLTSSPAIVVADLHSVSPKQSENFPTEEGEKEEDTEAQGATAHSPLSAQLSDPDDFTGLETSSLLQHGDTVLHISEENGMENPLLSSQFTFTPTELGKTDAVLDESHV</sequence>
<organism>
    <name type="scientific">Homo sapiens</name>
    <name type="common">Human</name>
    <dbReference type="NCBI Taxonomy" id="9606"/>
    <lineage>
        <taxon>Eukaryota</taxon>
        <taxon>Metazoa</taxon>
        <taxon>Chordata</taxon>
        <taxon>Craniata</taxon>
        <taxon>Vertebrata</taxon>
        <taxon>Euteleostomi</taxon>
        <taxon>Mammalia</taxon>
        <taxon>Eutheria</taxon>
        <taxon>Euarchontoglires</taxon>
        <taxon>Primates</taxon>
        <taxon>Haplorrhini</taxon>
        <taxon>Catarrhini</taxon>
        <taxon>Hominidae</taxon>
        <taxon>Homo</taxon>
    </lineage>
</organism>
<evidence type="ECO:0000250" key="1">
    <source>
        <dbReference type="UniProtKB" id="B1AL88"/>
    </source>
</evidence>
<evidence type="ECO:0000250" key="2">
    <source>
        <dbReference type="UniProtKB" id="Q8BLN6"/>
    </source>
</evidence>
<evidence type="ECO:0000255" key="3"/>
<evidence type="ECO:0000256" key="4">
    <source>
        <dbReference type="SAM" id="MobiDB-lite"/>
    </source>
</evidence>
<evidence type="ECO:0000269" key="5">
    <source>
    </source>
</evidence>
<evidence type="ECO:0000269" key="6">
    <source>
    </source>
</evidence>
<evidence type="ECO:0000269" key="7">
    <source>
    </source>
</evidence>
<evidence type="ECO:0000269" key="8">
    <source>
    </source>
</evidence>
<evidence type="ECO:0000303" key="9">
    <source>
    </source>
</evidence>
<evidence type="ECO:0000303" key="10">
    <source>
    </source>
</evidence>
<evidence type="ECO:0000303" key="11">
    <source>
    </source>
</evidence>
<evidence type="ECO:0000305" key="12"/>
<evidence type="ECO:0000312" key="13">
    <source>
        <dbReference type="HGNC" id="HGNC:26582"/>
    </source>
</evidence>
<evidence type="ECO:0007829" key="14">
    <source>
        <dbReference type="PDB" id="7SX3"/>
    </source>
</evidence>
<evidence type="ECO:0007829" key="15">
    <source>
        <dbReference type="PDB" id="7SX4"/>
    </source>
</evidence>
<feature type="chain" id="PRO_0000089348" description="Protein unc-80 homolog">
    <location>
        <begin position="1"/>
        <end position="3258"/>
    </location>
</feature>
<feature type="transmembrane region" description="Helical" evidence="3">
    <location>
        <begin position="2268"/>
        <end position="2288"/>
    </location>
</feature>
<feature type="transmembrane region" description="Helical" evidence="3">
    <location>
        <begin position="2398"/>
        <end position="2418"/>
    </location>
</feature>
<feature type="transmembrane region" description="Helical" evidence="3">
    <location>
        <begin position="2785"/>
        <end position="2805"/>
    </location>
</feature>
<feature type="transmembrane region" description="Helical" evidence="3">
    <location>
        <begin position="2831"/>
        <end position="2851"/>
    </location>
</feature>
<feature type="region of interest" description="Disordered" evidence="4">
    <location>
        <begin position="152"/>
        <end position="173"/>
    </location>
</feature>
<feature type="region of interest" description="Disordered" evidence="4">
    <location>
        <begin position="291"/>
        <end position="316"/>
    </location>
</feature>
<feature type="region of interest" description="Disordered" evidence="4">
    <location>
        <begin position="449"/>
        <end position="468"/>
    </location>
</feature>
<feature type="region of interest" description="Disordered" evidence="4">
    <location>
        <begin position="522"/>
        <end position="560"/>
    </location>
</feature>
<feature type="region of interest" description="Disordered" evidence="4">
    <location>
        <begin position="697"/>
        <end position="717"/>
    </location>
</feature>
<feature type="region of interest" description="Disordered" evidence="4">
    <location>
        <begin position="732"/>
        <end position="784"/>
    </location>
</feature>
<feature type="region of interest" description="Disordered" evidence="4">
    <location>
        <begin position="963"/>
        <end position="1019"/>
    </location>
</feature>
<feature type="region of interest" description="Disordered" evidence="4">
    <location>
        <begin position="1034"/>
        <end position="1076"/>
    </location>
</feature>
<feature type="region of interest" description="Disordered" evidence="4">
    <location>
        <begin position="1404"/>
        <end position="1447"/>
    </location>
</feature>
<feature type="region of interest" description="Disordered" evidence="4">
    <location>
        <begin position="1817"/>
        <end position="1836"/>
    </location>
</feature>
<feature type="region of interest" description="Disordered" evidence="4">
    <location>
        <begin position="2942"/>
        <end position="2982"/>
    </location>
</feature>
<feature type="region of interest" description="Disordered" evidence="4">
    <location>
        <begin position="3051"/>
        <end position="3213"/>
    </location>
</feature>
<feature type="compositionally biased region" description="Low complexity" evidence="4">
    <location>
        <begin position="155"/>
        <end position="166"/>
    </location>
</feature>
<feature type="compositionally biased region" description="Polar residues" evidence="4">
    <location>
        <begin position="295"/>
        <end position="307"/>
    </location>
</feature>
<feature type="compositionally biased region" description="Basic and acidic residues" evidence="4">
    <location>
        <begin position="698"/>
        <end position="712"/>
    </location>
</feature>
<feature type="compositionally biased region" description="Gly residues" evidence="4">
    <location>
        <begin position="732"/>
        <end position="767"/>
    </location>
</feature>
<feature type="compositionally biased region" description="Basic and acidic residues" evidence="4">
    <location>
        <begin position="769"/>
        <end position="780"/>
    </location>
</feature>
<feature type="compositionally biased region" description="Basic and acidic residues" evidence="4">
    <location>
        <begin position="965"/>
        <end position="974"/>
    </location>
</feature>
<feature type="compositionally biased region" description="Low complexity" evidence="4">
    <location>
        <begin position="1035"/>
        <end position="1052"/>
    </location>
</feature>
<feature type="compositionally biased region" description="Basic residues" evidence="4">
    <location>
        <begin position="1066"/>
        <end position="1076"/>
    </location>
</feature>
<feature type="compositionally biased region" description="Basic and acidic residues" evidence="4">
    <location>
        <begin position="1417"/>
        <end position="1429"/>
    </location>
</feature>
<feature type="compositionally biased region" description="Polar residues" evidence="4">
    <location>
        <begin position="2942"/>
        <end position="2964"/>
    </location>
</feature>
<feature type="compositionally biased region" description="Basic residues" evidence="4">
    <location>
        <begin position="3059"/>
        <end position="3068"/>
    </location>
</feature>
<feature type="compositionally biased region" description="Polar residues" evidence="4">
    <location>
        <begin position="3088"/>
        <end position="3100"/>
    </location>
</feature>
<feature type="compositionally biased region" description="Low complexity" evidence="4">
    <location>
        <begin position="3117"/>
        <end position="3129"/>
    </location>
</feature>
<feature type="compositionally biased region" description="Acidic residues" evidence="4">
    <location>
        <begin position="3175"/>
        <end position="3186"/>
    </location>
</feature>
<feature type="modified residue" description="Phosphoserine" evidence="2">
    <location>
        <position position="257"/>
    </location>
</feature>
<feature type="modified residue" description="Phosphoserine" evidence="2">
    <location>
        <position position="525"/>
    </location>
</feature>
<feature type="modified residue" description="Phosphoserine" evidence="2">
    <location>
        <position position="3042"/>
    </location>
</feature>
<feature type="splice variant" id="VSP_036741" description="In isoform 5 and isoform 6." evidence="10">
    <location>
        <begin position="1"/>
        <end position="2554"/>
    </location>
</feature>
<feature type="splice variant" id="VSP_036742" description="In isoform 3." evidence="10 11">
    <original>ASLVIPP</original>
    <variation>STFHFPP</variation>
    <location>
        <begin position="314"/>
        <end position="320"/>
    </location>
</feature>
<feature type="splice variant" id="VSP_036743" description="In isoform 3." evidence="10 11">
    <location>
        <begin position="321"/>
        <end position="3258"/>
    </location>
</feature>
<feature type="splice variant" id="VSP_054289" description="In isoform 7." evidence="12">
    <location>
        <begin position="822"/>
        <end position="826"/>
    </location>
</feature>
<feature type="splice variant" id="VSP_031528" description="In isoform 2." evidence="9">
    <location>
        <begin position="2604"/>
        <end position="3258"/>
    </location>
</feature>
<feature type="splice variant" id="VSP_036744" description="In isoform 5 and isoform 7." evidence="10">
    <location>
        <begin position="3020"/>
        <end position="3038"/>
    </location>
</feature>
<feature type="splice variant" id="VSP_036745" description="In isoform 4 and isoform 6." evidence="10">
    <original>S</original>
    <variation>R</variation>
    <location>
        <position position="3020"/>
    </location>
</feature>
<feature type="splice variant" id="VSP_036746" description="In isoform 4 and isoform 6." evidence="10">
    <location>
        <begin position="3021"/>
        <end position="3258"/>
    </location>
</feature>
<feature type="sequence variant" id="VAR_033656" description="In dbSNP:rs35822936.">
    <original>R</original>
    <variation>W</variation>
    <location>
        <position position="131"/>
    </location>
</feature>
<feature type="sequence variant" id="VAR_075874" description="In IHPRF2; dbSNP:rs864321623." evidence="7">
    <original>V</original>
    <variation>M</variation>
    <location>
        <position position="189"/>
    </location>
</feature>
<feature type="sequence variant" id="VAR_060196" description="In dbSNP:rs4673492.">
    <original>D</original>
    <variation>G</variation>
    <location>
        <position position="1505"/>
    </location>
</feature>
<feature type="sequence variant" id="VAR_075875" description="In IHPRF2; dbSNP:rs869025316." evidence="6">
    <original>P</original>
    <variation>S</variation>
    <location>
        <position position="1700"/>
    </location>
</feature>
<feature type="sequence conflict" description="In Ref. 1; BAC03521." evidence="12" ref="1">
    <original>V</original>
    <variation>A</variation>
    <location>
        <position position="185"/>
    </location>
</feature>
<feature type="sequence conflict" description="In Ref. 1; BAC03521." evidence="12" ref="1">
    <original>C</original>
    <variation>R</variation>
    <location>
        <position position="272"/>
    </location>
</feature>
<feature type="sequence conflict" description="In Ref. 5; BAB47472." evidence="12" ref="5">
    <original>N</original>
    <variation>Q</variation>
    <location>
        <position position="826"/>
    </location>
</feature>
<feature type="helix" evidence="14">
    <location>
        <begin position="23"/>
        <end position="33"/>
    </location>
</feature>
<feature type="helix" evidence="14">
    <location>
        <begin position="44"/>
        <end position="54"/>
    </location>
</feature>
<feature type="helix" evidence="14">
    <location>
        <begin position="76"/>
        <end position="95"/>
    </location>
</feature>
<feature type="helix" evidence="14">
    <location>
        <begin position="108"/>
        <end position="120"/>
    </location>
</feature>
<feature type="helix" evidence="14">
    <location>
        <begin position="182"/>
        <end position="192"/>
    </location>
</feature>
<feature type="helix" evidence="14">
    <location>
        <begin position="193"/>
        <end position="195"/>
    </location>
</feature>
<feature type="turn" evidence="14">
    <location>
        <begin position="196"/>
        <end position="198"/>
    </location>
</feature>
<feature type="helix" evidence="14">
    <location>
        <begin position="215"/>
        <end position="219"/>
    </location>
</feature>
<feature type="turn" evidence="14">
    <location>
        <begin position="227"/>
        <end position="229"/>
    </location>
</feature>
<feature type="helix" evidence="14">
    <location>
        <begin position="329"/>
        <end position="338"/>
    </location>
</feature>
<feature type="helix" evidence="14">
    <location>
        <begin position="345"/>
        <end position="364"/>
    </location>
</feature>
<feature type="helix" evidence="14">
    <location>
        <begin position="654"/>
        <end position="664"/>
    </location>
</feature>
<feature type="helix" evidence="14">
    <location>
        <begin position="670"/>
        <end position="686"/>
    </location>
</feature>
<feature type="helix" evidence="14">
    <location>
        <begin position="785"/>
        <end position="797"/>
    </location>
</feature>
<feature type="helix" evidence="14">
    <location>
        <begin position="819"/>
        <end position="835"/>
    </location>
</feature>
<feature type="helix" evidence="14">
    <location>
        <begin position="839"/>
        <end position="852"/>
    </location>
</feature>
<feature type="helix" evidence="14">
    <location>
        <begin position="855"/>
        <end position="866"/>
    </location>
</feature>
<feature type="helix" evidence="14">
    <location>
        <begin position="896"/>
        <end position="913"/>
    </location>
</feature>
<feature type="helix" evidence="14">
    <location>
        <begin position="916"/>
        <end position="919"/>
    </location>
</feature>
<feature type="helix" evidence="14">
    <location>
        <begin position="922"/>
        <end position="924"/>
    </location>
</feature>
<feature type="helix" evidence="14">
    <location>
        <begin position="925"/>
        <end position="940"/>
    </location>
</feature>
<feature type="helix" evidence="14">
    <location>
        <begin position="945"/>
        <end position="950"/>
    </location>
</feature>
<feature type="helix" evidence="14">
    <location>
        <begin position="952"/>
        <end position="955"/>
    </location>
</feature>
<feature type="helix" evidence="14">
    <location>
        <begin position="1177"/>
        <end position="1191"/>
    </location>
</feature>
<feature type="helix" evidence="14">
    <location>
        <begin position="1202"/>
        <end position="1207"/>
    </location>
</feature>
<feature type="turn" evidence="14">
    <location>
        <begin position="1208"/>
        <end position="1210"/>
    </location>
</feature>
<feature type="strand" evidence="15">
    <location>
        <begin position="1211"/>
        <end position="1213"/>
    </location>
</feature>
<feature type="helix" evidence="14">
    <location>
        <begin position="1215"/>
        <end position="1234"/>
    </location>
</feature>
<feature type="helix" evidence="14">
    <location>
        <begin position="1268"/>
        <end position="1292"/>
    </location>
</feature>
<feature type="helix" evidence="14">
    <location>
        <begin position="1339"/>
        <end position="1359"/>
    </location>
</feature>
<feature type="turn" evidence="14">
    <location>
        <begin position="1453"/>
        <end position="1455"/>
    </location>
</feature>
<feature type="helix" evidence="14">
    <location>
        <begin position="1460"/>
        <end position="1468"/>
    </location>
</feature>
<feature type="strand" evidence="14">
    <location>
        <begin position="1469"/>
        <end position="1471"/>
    </location>
</feature>
<feature type="helix" evidence="14">
    <location>
        <begin position="1485"/>
        <end position="1502"/>
    </location>
</feature>
<feature type="helix" evidence="14">
    <location>
        <begin position="1555"/>
        <end position="1563"/>
    </location>
</feature>
<feature type="helix" evidence="14">
    <location>
        <begin position="1571"/>
        <end position="1578"/>
    </location>
</feature>
<feature type="turn" evidence="14">
    <location>
        <begin position="1579"/>
        <end position="1582"/>
    </location>
</feature>
<feature type="helix" evidence="14">
    <location>
        <begin position="1585"/>
        <end position="1597"/>
    </location>
</feature>
<feature type="helix" evidence="14">
    <location>
        <begin position="1598"/>
        <end position="1600"/>
    </location>
</feature>
<feature type="helix" evidence="14">
    <location>
        <begin position="1604"/>
        <end position="1620"/>
    </location>
</feature>
<feature type="helix" evidence="14">
    <location>
        <begin position="1622"/>
        <end position="1633"/>
    </location>
</feature>
<feature type="helix" evidence="14">
    <location>
        <begin position="1638"/>
        <end position="1653"/>
    </location>
</feature>
<feature type="turn" evidence="14">
    <location>
        <begin position="1654"/>
        <end position="1656"/>
    </location>
</feature>
<feature type="helix" evidence="14">
    <location>
        <begin position="1659"/>
        <end position="1661"/>
    </location>
</feature>
<feature type="helix" evidence="14">
    <location>
        <begin position="1666"/>
        <end position="1669"/>
    </location>
</feature>
<feature type="helix" evidence="14">
    <location>
        <begin position="1737"/>
        <end position="1749"/>
    </location>
</feature>
<feature type="helix" evidence="14">
    <location>
        <begin position="1753"/>
        <end position="1755"/>
    </location>
</feature>
<feature type="helix" evidence="14">
    <location>
        <begin position="1758"/>
        <end position="1762"/>
    </location>
</feature>
<feature type="helix" evidence="14">
    <location>
        <begin position="1845"/>
        <end position="1848"/>
    </location>
</feature>
<feature type="helix" evidence="14">
    <location>
        <begin position="1851"/>
        <end position="1857"/>
    </location>
</feature>
<feature type="helix" evidence="14">
    <location>
        <begin position="1870"/>
        <end position="1884"/>
    </location>
</feature>
<feature type="helix" evidence="14">
    <location>
        <begin position="1886"/>
        <end position="1899"/>
    </location>
</feature>
<feature type="helix" evidence="14">
    <location>
        <begin position="1903"/>
        <end position="1917"/>
    </location>
</feature>
<feature type="helix" evidence="14">
    <location>
        <begin position="1922"/>
        <end position="1941"/>
    </location>
</feature>
<feature type="helix" evidence="14">
    <location>
        <begin position="1947"/>
        <end position="1962"/>
    </location>
</feature>
<feature type="helix" evidence="14">
    <location>
        <begin position="1970"/>
        <end position="1980"/>
    </location>
</feature>
<feature type="turn" evidence="14">
    <location>
        <begin position="1984"/>
        <end position="1986"/>
    </location>
</feature>
<feature type="strand" evidence="14">
    <location>
        <begin position="1996"/>
        <end position="2001"/>
    </location>
</feature>
<feature type="strand" evidence="14">
    <location>
        <begin position="2003"/>
        <end position="2006"/>
    </location>
</feature>
<feature type="strand" evidence="14">
    <location>
        <begin position="2010"/>
        <end position="2013"/>
    </location>
</feature>
<feature type="helix" evidence="14">
    <location>
        <begin position="2020"/>
        <end position="2031"/>
    </location>
</feature>
<feature type="helix" evidence="14">
    <location>
        <begin position="2035"/>
        <end position="2037"/>
    </location>
</feature>
<feature type="strand" evidence="14">
    <location>
        <begin position="2040"/>
        <end position="2045"/>
    </location>
</feature>
<feature type="turn" evidence="14">
    <location>
        <begin position="2046"/>
        <end position="2049"/>
    </location>
</feature>
<feature type="helix" evidence="14">
    <location>
        <begin position="2058"/>
        <end position="2061"/>
    </location>
</feature>
<feature type="strand" evidence="14">
    <location>
        <begin position="2071"/>
        <end position="2076"/>
    </location>
</feature>
<feature type="helix" evidence="14">
    <location>
        <begin position="2079"/>
        <end position="2109"/>
    </location>
</feature>
<feature type="helix" evidence="14">
    <location>
        <begin position="2113"/>
        <end position="2115"/>
    </location>
</feature>
<feature type="helix" evidence="14">
    <location>
        <begin position="2116"/>
        <end position="2129"/>
    </location>
</feature>
<feature type="helix" evidence="14">
    <location>
        <begin position="2133"/>
        <end position="2138"/>
    </location>
</feature>
<feature type="helix" evidence="14">
    <location>
        <begin position="2142"/>
        <end position="2145"/>
    </location>
</feature>
<feature type="turn" evidence="14">
    <location>
        <begin position="2148"/>
        <end position="2150"/>
    </location>
</feature>
<feature type="helix" evidence="14">
    <location>
        <begin position="2151"/>
        <end position="2174"/>
    </location>
</feature>
<feature type="helix" evidence="14">
    <location>
        <begin position="2186"/>
        <end position="2199"/>
    </location>
</feature>
<feature type="helix" evidence="14">
    <location>
        <begin position="2204"/>
        <end position="2220"/>
    </location>
</feature>
<feature type="helix" evidence="14">
    <location>
        <begin position="2222"/>
        <end position="2225"/>
    </location>
</feature>
<feature type="turn" evidence="14">
    <location>
        <begin position="2231"/>
        <end position="2233"/>
    </location>
</feature>
<feature type="helix" evidence="14">
    <location>
        <begin position="2234"/>
        <end position="2243"/>
    </location>
</feature>
<feature type="turn" evidence="14">
    <location>
        <begin position="2244"/>
        <end position="2246"/>
    </location>
</feature>
<feature type="helix" evidence="14">
    <location>
        <begin position="2248"/>
        <end position="2277"/>
    </location>
</feature>
<feature type="helix" evidence="14">
    <location>
        <begin position="2278"/>
        <end position="2280"/>
    </location>
</feature>
<feature type="helix" evidence="14">
    <location>
        <begin position="2297"/>
        <end position="2308"/>
    </location>
</feature>
<feature type="helix" evidence="14">
    <location>
        <begin position="2317"/>
        <end position="2320"/>
    </location>
</feature>
<feature type="strand" evidence="15">
    <location>
        <begin position="2330"/>
        <end position="2332"/>
    </location>
</feature>
<feature type="helix" evidence="14">
    <location>
        <begin position="2343"/>
        <end position="2356"/>
    </location>
</feature>
<feature type="strand" evidence="14">
    <location>
        <begin position="2358"/>
        <end position="2360"/>
    </location>
</feature>
<feature type="helix" evidence="14">
    <location>
        <begin position="2361"/>
        <end position="2387"/>
    </location>
</feature>
<feature type="helix" evidence="14">
    <location>
        <begin position="2391"/>
        <end position="2414"/>
    </location>
</feature>
<feature type="helix" evidence="14">
    <location>
        <begin position="2415"/>
        <end position="2419"/>
    </location>
</feature>
<feature type="helix" evidence="14">
    <location>
        <begin position="2480"/>
        <end position="2516"/>
    </location>
</feature>
<feature type="helix" evidence="14">
    <location>
        <begin position="2531"/>
        <end position="2547"/>
    </location>
</feature>
<feature type="turn" evidence="14">
    <location>
        <begin position="2548"/>
        <end position="2550"/>
    </location>
</feature>
<feature type="helix" evidence="14">
    <location>
        <begin position="2552"/>
        <end position="2555"/>
    </location>
</feature>
<feature type="helix" evidence="14">
    <location>
        <begin position="2558"/>
        <end position="2566"/>
    </location>
</feature>
<feature type="turn" evidence="14">
    <location>
        <begin position="2567"/>
        <end position="2570"/>
    </location>
</feature>
<feature type="turn" evidence="14">
    <location>
        <begin position="2576"/>
        <end position="2578"/>
    </location>
</feature>
<feature type="helix" evidence="14">
    <location>
        <begin position="2579"/>
        <end position="2598"/>
    </location>
</feature>
<feature type="helix" evidence="14">
    <location>
        <begin position="2600"/>
        <end position="2605"/>
    </location>
</feature>
<feature type="helix" evidence="14">
    <location>
        <begin position="2609"/>
        <end position="2624"/>
    </location>
</feature>
<feature type="helix" evidence="14">
    <location>
        <begin position="2626"/>
        <end position="2630"/>
    </location>
</feature>
<feature type="helix" evidence="14">
    <location>
        <begin position="2633"/>
        <end position="2645"/>
    </location>
</feature>
<feature type="helix" evidence="14">
    <location>
        <begin position="2671"/>
        <end position="2687"/>
    </location>
</feature>
<feature type="turn" evidence="14">
    <location>
        <begin position="2688"/>
        <end position="2691"/>
    </location>
</feature>
<feature type="helix" evidence="14">
    <location>
        <begin position="2695"/>
        <end position="2698"/>
    </location>
</feature>
<feature type="helix" evidence="14">
    <location>
        <begin position="2699"/>
        <end position="2701"/>
    </location>
</feature>
<feature type="helix" evidence="14">
    <location>
        <begin position="2707"/>
        <end position="2713"/>
    </location>
</feature>
<feature type="helix" evidence="14">
    <location>
        <begin position="2716"/>
        <end position="2721"/>
    </location>
</feature>
<feature type="helix" evidence="14">
    <location>
        <begin position="2734"/>
        <end position="2748"/>
    </location>
</feature>
<feature type="helix" evidence="14">
    <location>
        <begin position="2788"/>
        <end position="2804"/>
    </location>
</feature>
<feature type="turn" evidence="14">
    <location>
        <begin position="2805"/>
        <end position="2808"/>
    </location>
</feature>
<feature type="helix" evidence="14">
    <location>
        <begin position="2809"/>
        <end position="2812"/>
    </location>
</feature>
<feature type="helix" evidence="14">
    <location>
        <begin position="2813"/>
        <end position="2819"/>
    </location>
</feature>
<feature type="helix" evidence="14">
    <location>
        <begin position="2821"/>
        <end position="2825"/>
    </location>
</feature>
<feature type="strand" evidence="14">
    <location>
        <begin position="2829"/>
        <end position="2831"/>
    </location>
</feature>
<feature type="helix" evidence="14">
    <location>
        <begin position="2832"/>
        <end position="2843"/>
    </location>
</feature>
<feature type="helix" evidence="14">
    <location>
        <begin position="2848"/>
        <end position="2854"/>
    </location>
</feature>
<feature type="helix" evidence="14">
    <location>
        <begin position="2857"/>
        <end position="2860"/>
    </location>
</feature>
<feature type="helix" evidence="14">
    <location>
        <begin position="2868"/>
        <end position="2870"/>
    </location>
</feature>
<feature type="helix" evidence="14">
    <location>
        <begin position="2873"/>
        <end position="2879"/>
    </location>
</feature>
<feature type="helix" evidence="14">
    <location>
        <begin position="2891"/>
        <end position="2908"/>
    </location>
</feature>
<comment type="function">
    <text evidence="2">Auxiliary subunit of the NALCN sodium channel complex, a voltage-gated ion channel responsible for the resting Na(+) permeability that controls neuronal excitability (By similarity). Activated by neuropeptides substance P, neurotensin, and extracellular Ca(2+) that regulates neuronal excitability by controlling the sizes of NALCN-dependent sodium-leak current. UNC80 is essential for NALCN sensitivity to extracellular Ca(2+) (By similarity).</text>
</comment>
<comment type="subunit">
    <text evidence="1 2">NALCN complex consists of NALCN and auxiliary subunits, UNC79, UNC80 and NACL1. These auxiliary subunits are essential for the NALCN complex function (By similarity). Interacts (via N-terminus half) with NALCN; this interaction facilitates NALCN surface localization (By similarity). Interacts with UNC79 (By similarity). UNC80 bridges NALCN to UNC79 (By similarity).</text>
</comment>
<comment type="subcellular location">
    <subcellularLocation>
        <location evidence="8">Cell membrane</location>
        <topology evidence="3">Multi-pass membrane protein</topology>
    </subcellularLocation>
</comment>
<comment type="alternative products">
    <event type="alternative splicing"/>
    <isoform>
        <id>Q8N2C7-1</id>
        <name>1</name>
        <sequence type="displayed"/>
    </isoform>
    <isoform>
        <id>Q8N2C7-2</id>
        <name>2</name>
        <sequence type="described" ref="VSP_031528"/>
    </isoform>
    <isoform>
        <id>Q8N2C7-3</id>
        <name>3</name>
        <sequence type="described" ref="VSP_036742 VSP_036743"/>
    </isoform>
    <isoform>
        <id>Q8N2C7-4</id>
        <name>4</name>
        <sequence type="described" ref="VSP_036745 VSP_036746"/>
    </isoform>
    <isoform>
        <id>Q8N2C7-5</id>
        <name>5</name>
        <sequence type="described" ref="VSP_036741 VSP_036744"/>
    </isoform>
    <isoform>
        <id>Q8N2C7-6</id>
        <name>6</name>
        <sequence type="described" ref="VSP_036741 VSP_036745 VSP_036746"/>
    </isoform>
    <isoform>
        <id>Q8N2C7-7</id>
        <name>7</name>
        <sequence type="described" ref="VSP_054289 VSP_036744"/>
    </isoform>
</comment>
<comment type="tissue specificity">
    <text evidence="5">Moderately expressed in fetal brain, spinal cord, skeletal muscle, thymus, spleen, fetal liver, small intestine, colon, kidney and uterus. Highly expressed in adrenal gland, prostate and testis, as well as in brain and cerebellum.</text>
</comment>
<comment type="PTM">
    <text evidence="2">Phosphorylated on tyrosine residues.</text>
</comment>
<comment type="disease" evidence="5 6 7">
    <disease id="DI-04645">
        <name>Hypotonia, infantile, with psychomotor retardation and characteristic facies 2</name>
        <acronym>IHPRF2</acronym>
        <description>An autosomal recessive, neurodegenerative disease characterized by severe truncal hypotonia since birth or early infancy, progressive peripheral spasticity, and profound psychomotor developmental delay. Some patients may have seizures.</description>
        <dbReference type="MIM" id="616801"/>
    </disease>
    <text>The disease is caused by variants affecting the gene represented in this entry.</text>
</comment>
<comment type="similarity">
    <text evidence="12">Belongs to the unc-80 family.</text>
</comment>
<protein>
    <recommendedName>
        <fullName>Protein unc-80 homolog</fullName>
    </recommendedName>
</protein>
<gene>
    <name evidence="13" type="primary">UNC80</name>
    <name type="synonym">C2orf21</name>
    <name type="synonym">KIAA1843</name>
</gene>
<proteinExistence type="evidence at protein level"/>
<name>UNC80_HUMAN</name>
<accession>Q8N2C7</accession>
<accession>B2RN50</accession>
<accession>B4DQY9</accession>
<accession>B4DZB3</accession>
<accession>C4IXS8</accession>
<accession>C9J1U3</accession>
<accession>Q96JI4</accession>
<accession>Q96SS0</accession>
<reference key="1">
    <citation type="journal article" date="2004" name="Nat. Genet.">
        <title>Complete sequencing and characterization of 21,243 full-length human cDNAs.</title>
        <authorList>
            <person name="Ota T."/>
            <person name="Suzuki Y."/>
            <person name="Nishikawa T."/>
            <person name="Otsuki T."/>
            <person name="Sugiyama T."/>
            <person name="Irie R."/>
            <person name="Wakamatsu A."/>
            <person name="Hayashi K."/>
            <person name="Sato H."/>
            <person name="Nagai K."/>
            <person name="Kimura K."/>
            <person name="Makita H."/>
            <person name="Sekine M."/>
            <person name="Obayashi M."/>
            <person name="Nishi T."/>
            <person name="Shibahara T."/>
            <person name="Tanaka T."/>
            <person name="Ishii S."/>
            <person name="Yamamoto J."/>
            <person name="Saito K."/>
            <person name="Kawai Y."/>
            <person name="Isono Y."/>
            <person name="Nakamura Y."/>
            <person name="Nagahari K."/>
            <person name="Murakami K."/>
            <person name="Yasuda T."/>
            <person name="Iwayanagi T."/>
            <person name="Wagatsuma M."/>
            <person name="Shiratori A."/>
            <person name="Sudo H."/>
            <person name="Hosoiri T."/>
            <person name="Kaku Y."/>
            <person name="Kodaira H."/>
            <person name="Kondo H."/>
            <person name="Sugawara M."/>
            <person name="Takahashi M."/>
            <person name="Kanda K."/>
            <person name="Yokoi T."/>
            <person name="Furuya T."/>
            <person name="Kikkawa E."/>
            <person name="Omura Y."/>
            <person name="Abe K."/>
            <person name="Kamihara K."/>
            <person name="Katsuta N."/>
            <person name="Sato K."/>
            <person name="Tanikawa M."/>
            <person name="Yamazaki M."/>
            <person name="Ninomiya K."/>
            <person name="Ishibashi T."/>
            <person name="Yamashita H."/>
            <person name="Murakawa K."/>
            <person name="Fujimori K."/>
            <person name="Tanai H."/>
            <person name="Kimata M."/>
            <person name="Watanabe M."/>
            <person name="Hiraoka S."/>
            <person name="Chiba Y."/>
            <person name="Ishida S."/>
            <person name="Ono Y."/>
            <person name="Takiguchi S."/>
            <person name="Watanabe S."/>
            <person name="Yosida M."/>
            <person name="Hotuta T."/>
            <person name="Kusano J."/>
            <person name="Kanehori K."/>
            <person name="Takahashi-Fujii A."/>
            <person name="Hara H."/>
            <person name="Tanase T.-O."/>
            <person name="Nomura Y."/>
            <person name="Togiya S."/>
            <person name="Komai F."/>
            <person name="Hara R."/>
            <person name="Takeuchi K."/>
            <person name="Arita M."/>
            <person name="Imose N."/>
            <person name="Musashino K."/>
            <person name="Yuuki H."/>
            <person name="Oshima A."/>
            <person name="Sasaki N."/>
            <person name="Aotsuka S."/>
            <person name="Yoshikawa Y."/>
            <person name="Matsunawa H."/>
            <person name="Ichihara T."/>
            <person name="Shiohata N."/>
            <person name="Sano S."/>
            <person name="Moriya S."/>
            <person name="Momiyama H."/>
            <person name="Satoh N."/>
            <person name="Takami S."/>
            <person name="Terashima Y."/>
            <person name="Suzuki O."/>
            <person name="Nakagawa S."/>
            <person name="Senoh A."/>
            <person name="Mizoguchi H."/>
            <person name="Goto Y."/>
            <person name="Shimizu F."/>
            <person name="Wakebe H."/>
            <person name="Hishigaki H."/>
            <person name="Watanabe T."/>
            <person name="Sugiyama A."/>
            <person name="Takemoto M."/>
            <person name="Kawakami B."/>
            <person name="Yamazaki M."/>
            <person name="Watanabe K."/>
            <person name="Kumagai A."/>
            <person name="Itakura S."/>
            <person name="Fukuzumi Y."/>
            <person name="Fujimori Y."/>
            <person name="Komiyama M."/>
            <person name="Tashiro H."/>
            <person name="Tanigami A."/>
            <person name="Fujiwara T."/>
            <person name="Ono T."/>
            <person name="Yamada K."/>
            <person name="Fujii Y."/>
            <person name="Ozaki K."/>
            <person name="Hirao M."/>
            <person name="Ohmori Y."/>
            <person name="Kawabata A."/>
            <person name="Hikiji T."/>
            <person name="Kobatake N."/>
            <person name="Inagaki H."/>
            <person name="Ikema Y."/>
            <person name="Okamoto S."/>
            <person name="Okitani R."/>
            <person name="Kawakami T."/>
            <person name="Noguchi S."/>
            <person name="Itoh T."/>
            <person name="Shigeta K."/>
            <person name="Senba T."/>
            <person name="Matsumura K."/>
            <person name="Nakajima Y."/>
            <person name="Mizuno T."/>
            <person name="Morinaga M."/>
            <person name="Sasaki M."/>
            <person name="Togashi T."/>
            <person name="Oyama M."/>
            <person name="Hata H."/>
            <person name="Watanabe M."/>
            <person name="Komatsu T."/>
            <person name="Mizushima-Sugano J."/>
            <person name="Satoh T."/>
            <person name="Shirai Y."/>
            <person name="Takahashi Y."/>
            <person name="Nakagawa K."/>
            <person name="Okumura K."/>
            <person name="Nagase T."/>
            <person name="Nomura N."/>
            <person name="Kikuchi H."/>
            <person name="Masuho Y."/>
            <person name="Yamashita R."/>
            <person name="Nakai K."/>
            <person name="Yada T."/>
            <person name="Nakamura Y."/>
            <person name="Ohara O."/>
            <person name="Isogai T."/>
            <person name="Sugano S."/>
        </authorList>
    </citation>
    <scope>NUCLEOTIDE SEQUENCE [LARGE SCALE MRNA] (ISOFORMS 3; 4; 5 AND 6)</scope>
    <scope>NUCLEOTIDE SEQUENCE [LARGE SCALE MRNA] OF 840-3258 (ISOFORM 4)</scope>
    <source>
        <tissue>Teratocarcinoma</tissue>
        <tissue>Testis</tissue>
    </source>
</reference>
<reference key="2">
    <citation type="journal article" date="2005" name="Nature">
        <title>Generation and annotation of the DNA sequences of human chromosomes 2 and 4.</title>
        <authorList>
            <person name="Hillier L.W."/>
            <person name="Graves T.A."/>
            <person name="Fulton R.S."/>
            <person name="Fulton L.A."/>
            <person name="Pepin K.H."/>
            <person name="Minx P."/>
            <person name="Wagner-McPherson C."/>
            <person name="Layman D."/>
            <person name="Wylie K."/>
            <person name="Sekhon M."/>
            <person name="Becker M.C."/>
            <person name="Fewell G.A."/>
            <person name="Delehaunty K.D."/>
            <person name="Miner T.L."/>
            <person name="Nash W.E."/>
            <person name="Kremitzki C."/>
            <person name="Oddy L."/>
            <person name="Du H."/>
            <person name="Sun H."/>
            <person name="Bradshaw-Cordum H."/>
            <person name="Ali J."/>
            <person name="Carter J."/>
            <person name="Cordes M."/>
            <person name="Harris A."/>
            <person name="Isak A."/>
            <person name="van Brunt A."/>
            <person name="Nguyen C."/>
            <person name="Du F."/>
            <person name="Courtney L."/>
            <person name="Kalicki J."/>
            <person name="Ozersky P."/>
            <person name="Abbott S."/>
            <person name="Armstrong J."/>
            <person name="Belter E.A."/>
            <person name="Caruso L."/>
            <person name="Cedroni M."/>
            <person name="Cotton M."/>
            <person name="Davidson T."/>
            <person name="Desai A."/>
            <person name="Elliott G."/>
            <person name="Erb T."/>
            <person name="Fronick C."/>
            <person name="Gaige T."/>
            <person name="Haakenson W."/>
            <person name="Haglund K."/>
            <person name="Holmes A."/>
            <person name="Harkins R."/>
            <person name="Kim K."/>
            <person name="Kruchowski S.S."/>
            <person name="Strong C.M."/>
            <person name="Grewal N."/>
            <person name="Goyea E."/>
            <person name="Hou S."/>
            <person name="Levy A."/>
            <person name="Martinka S."/>
            <person name="Mead K."/>
            <person name="McLellan M.D."/>
            <person name="Meyer R."/>
            <person name="Randall-Maher J."/>
            <person name="Tomlinson C."/>
            <person name="Dauphin-Kohlberg S."/>
            <person name="Kozlowicz-Reilly A."/>
            <person name="Shah N."/>
            <person name="Swearengen-Shahid S."/>
            <person name="Snider J."/>
            <person name="Strong J.T."/>
            <person name="Thompson J."/>
            <person name="Yoakum M."/>
            <person name="Leonard S."/>
            <person name="Pearman C."/>
            <person name="Trani L."/>
            <person name="Radionenko M."/>
            <person name="Waligorski J.E."/>
            <person name="Wang C."/>
            <person name="Rock S.M."/>
            <person name="Tin-Wollam A.-M."/>
            <person name="Maupin R."/>
            <person name="Latreille P."/>
            <person name="Wendl M.C."/>
            <person name="Yang S.-P."/>
            <person name="Pohl C."/>
            <person name="Wallis J.W."/>
            <person name="Spieth J."/>
            <person name="Bieri T.A."/>
            <person name="Berkowicz N."/>
            <person name="Nelson J.O."/>
            <person name="Osborne J."/>
            <person name="Ding L."/>
            <person name="Meyer R."/>
            <person name="Sabo A."/>
            <person name="Shotland Y."/>
            <person name="Sinha P."/>
            <person name="Wohldmann P.E."/>
            <person name="Cook L.L."/>
            <person name="Hickenbotham M.T."/>
            <person name="Eldred J."/>
            <person name="Williams D."/>
            <person name="Jones T.A."/>
            <person name="She X."/>
            <person name="Ciccarelli F.D."/>
            <person name="Izaurralde E."/>
            <person name="Taylor J."/>
            <person name="Schmutz J."/>
            <person name="Myers R.M."/>
            <person name="Cox D.R."/>
            <person name="Huang X."/>
            <person name="McPherson J.D."/>
            <person name="Mardis E.R."/>
            <person name="Clifton S.W."/>
            <person name="Warren W.C."/>
            <person name="Chinwalla A.T."/>
            <person name="Eddy S.R."/>
            <person name="Marra M.A."/>
            <person name="Ovcharenko I."/>
            <person name="Furey T.S."/>
            <person name="Miller W."/>
            <person name="Eichler E.E."/>
            <person name="Bork P."/>
            <person name="Suyama M."/>
            <person name="Torrents D."/>
            <person name="Waterston R.H."/>
            <person name="Wilson R.K."/>
        </authorList>
    </citation>
    <scope>NUCLEOTIDE SEQUENCE [LARGE SCALE GENOMIC DNA]</scope>
</reference>
<reference key="3">
    <citation type="submission" date="2005-07" db="EMBL/GenBank/DDBJ databases">
        <authorList>
            <person name="Mural R.J."/>
            <person name="Istrail S."/>
            <person name="Sutton G.G."/>
            <person name="Florea L."/>
            <person name="Halpern A.L."/>
            <person name="Mobarry C.M."/>
            <person name="Lippert R."/>
            <person name="Walenz B."/>
            <person name="Shatkay H."/>
            <person name="Dew I."/>
            <person name="Miller J.R."/>
            <person name="Flanigan M.J."/>
            <person name="Edwards N.J."/>
            <person name="Bolanos R."/>
            <person name="Fasulo D."/>
            <person name="Halldorsson B.V."/>
            <person name="Hannenhalli S."/>
            <person name="Turner R."/>
            <person name="Yooseph S."/>
            <person name="Lu F."/>
            <person name="Nusskern D.R."/>
            <person name="Shue B.C."/>
            <person name="Zheng X.H."/>
            <person name="Zhong F."/>
            <person name="Delcher A.L."/>
            <person name="Huson D.H."/>
            <person name="Kravitz S.A."/>
            <person name="Mouchard L."/>
            <person name="Reinert K."/>
            <person name="Remington K.A."/>
            <person name="Clark A.G."/>
            <person name="Waterman M.S."/>
            <person name="Eichler E.E."/>
            <person name="Adams M.D."/>
            <person name="Hunkapiller M.W."/>
            <person name="Myers E.W."/>
            <person name="Venter J.C."/>
        </authorList>
    </citation>
    <scope>NUCLEOTIDE SEQUENCE [LARGE SCALE GENOMIC DNA]</scope>
</reference>
<reference key="4">
    <citation type="journal article" date="2004" name="Genome Res.">
        <title>The status, quality, and expansion of the NIH full-length cDNA project: the Mammalian Gene Collection (MGC).</title>
        <authorList>
            <consortium name="The MGC Project Team"/>
        </authorList>
    </citation>
    <scope>NUCLEOTIDE SEQUENCE [LARGE SCALE MRNA] (ISOFORM 3)</scope>
    <source>
        <tissue>Brain</tissue>
    </source>
</reference>
<reference key="5">
    <citation type="journal article" date="2001" name="DNA Res.">
        <title>Prediction of the coding sequences of unidentified human genes. XX. The complete sequences of 100 new cDNA clones from brain which code for large proteins in vitro.</title>
        <authorList>
            <person name="Nagase T."/>
            <person name="Nakayama M."/>
            <person name="Nakajima D."/>
            <person name="Kikuno R."/>
            <person name="Ohara O."/>
        </authorList>
    </citation>
    <scope>NUCLEOTIDE SEQUENCE [LARGE SCALE MRNA] OF 826-3258 (ISOFORM 2)</scope>
    <source>
        <tissue>Brain</tissue>
    </source>
</reference>
<reference key="6">
    <citation type="journal article" date="2002" name="DNA Res.">
        <title>Construction of expression-ready cDNA clones for KIAA genes: manual curation of 330 KIAA cDNA clones.</title>
        <authorList>
            <person name="Nakajima D."/>
            <person name="Okazaki N."/>
            <person name="Yamakawa H."/>
            <person name="Kikuno R."/>
            <person name="Ohara O."/>
            <person name="Nagase T."/>
        </authorList>
    </citation>
    <scope>SEQUENCE REVISION</scope>
</reference>
<reference key="7">
    <citation type="journal article" date="2016" name="J. Med. Genet.">
        <title>UNC80 mutation causes a syndrome of hypotonia, severe intellectual disability, dyskinesia and dysmorphism, similar to that caused by mutations in its interacting cation channel NALCN.</title>
        <authorList>
            <person name="Perez Y."/>
            <person name="Kadir R."/>
            <person name="Volodarsky M."/>
            <person name="Noyman I."/>
            <person name="Flusser H."/>
            <person name="Shorer Z."/>
            <person name="Gradstein L."/>
            <person name="Birnbaum R.Y."/>
            <person name="Birk O.S."/>
        </authorList>
    </citation>
    <scope>INVOLVEMENT IN IHPRF2</scope>
    <scope>TISSUE SPECIFICITY</scope>
</reference>
<reference key="8">
    <citation type="journal article" date="2016" name="Am. J. Hum. Genet.">
        <title>Biallelic mutations in UNC80 cause persistent hypotonia, encephalopathy, growth retardation, and severe intellectual disability.</title>
        <authorList>
            <consortium name="Care4Rare Canada Consortium"/>
            <consortium name="Baylor-Hopkins Center for Mendelian Genomics"/>
            <person name="Stray-Pedersen A."/>
            <person name="Cobben J.M."/>
            <person name="Prescott T.E."/>
            <person name="Lee S."/>
            <person name="Cang C."/>
            <person name="Aranda K."/>
            <person name="Ahmed S."/>
            <person name="Alders M."/>
            <person name="Gerstner T."/>
            <person name="Aslaksen K."/>
            <person name="Tetreault M."/>
            <person name="Qin W."/>
            <person name="Hartley T."/>
            <person name="Jhangiani S.N."/>
            <person name="Muzny D.M."/>
            <person name="Tarailo-Graovac M."/>
            <person name="van Karnebeek C.D."/>
            <person name="Lupski J.R."/>
            <person name="Ren D."/>
            <person name="Yoon G."/>
        </authorList>
    </citation>
    <scope>INVOLVEMENT IN IHPRF2</scope>
    <scope>VARIANT IHPRF2 SER-1700</scope>
</reference>
<reference key="9">
    <citation type="journal article" date="2016" name="Am. J. Hum. Genet.">
        <title>Mutations in UNC80, encoding part of the UNC79-UNC80-NALCN channel complex, cause autosomal-recessive severe infantile encephalopathy.</title>
        <authorList>
            <person name="Shamseldin H.E."/>
            <person name="Faqeih E."/>
            <person name="Alasmari A."/>
            <person name="Zaki M.S."/>
            <person name="Gleeson J.G."/>
            <person name="Alkuraya F.S."/>
        </authorList>
    </citation>
    <scope>INVOLVEMENT IN IHPRF2</scope>
    <scope>VARIANT IHPRF2 MET-189</scope>
</reference>
<reference key="10">
    <citation type="journal article" date="2020" name="Sci. Adv.">
        <title>The NALCN channel complex is voltage sensitive and directly modulated by extracellular calcium.</title>
        <authorList>
            <person name="Chua H.C."/>
            <person name="Wulf M."/>
            <person name="Weidling C."/>
            <person name="Rasmussen L.P."/>
            <person name="Pless S.A."/>
        </authorList>
    </citation>
    <scope>SUBCELLULAR LOCATION</scope>
</reference>
<keyword id="KW-0002">3D-structure</keyword>
<keyword id="KW-0025">Alternative splicing</keyword>
<keyword id="KW-1003">Cell membrane</keyword>
<keyword id="KW-0225">Disease variant</keyword>
<keyword id="KW-0472">Membrane</keyword>
<keyword id="KW-0523">Neurodegeneration</keyword>
<keyword id="KW-0597">Phosphoprotein</keyword>
<keyword id="KW-1267">Proteomics identification</keyword>
<keyword id="KW-1185">Reference proteome</keyword>
<keyword id="KW-0812">Transmembrane</keyword>
<keyword id="KW-1133">Transmembrane helix</keyword>
<dbReference type="EMBL" id="AK027583">
    <property type="protein sequence ID" value="BAB55211.1"/>
    <property type="molecule type" value="mRNA"/>
</dbReference>
<dbReference type="EMBL" id="AK090815">
    <property type="protein sequence ID" value="BAC03521.1"/>
    <property type="molecule type" value="mRNA"/>
</dbReference>
<dbReference type="EMBL" id="AK299022">
    <property type="protein sequence ID" value="BAG61101.1"/>
    <property type="molecule type" value="mRNA"/>
</dbReference>
<dbReference type="EMBL" id="AK302830">
    <property type="protein sequence ID" value="BAG64025.1"/>
    <property type="molecule type" value="mRNA"/>
</dbReference>
<dbReference type="EMBL" id="AC006385">
    <property type="status" value="NOT_ANNOTATED_CDS"/>
    <property type="molecule type" value="Genomic_DNA"/>
</dbReference>
<dbReference type="EMBL" id="AC006464">
    <property type="status" value="NOT_ANNOTATED_CDS"/>
    <property type="molecule type" value="Genomic_DNA"/>
</dbReference>
<dbReference type="EMBL" id="AC007038">
    <property type="status" value="NOT_ANNOTATED_CDS"/>
    <property type="molecule type" value="Genomic_DNA"/>
</dbReference>
<dbReference type="EMBL" id="CH471063">
    <property type="protein sequence ID" value="EAW70468.1"/>
    <property type="molecule type" value="Genomic_DNA"/>
</dbReference>
<dbReference type="EMBL" id="BC136690">
    <property type="protein sequence ID" value="AAI36691.1"/>
    <property type="molecule type" value="mRNA"/>
</dbReference>
<dbReference type="EMBL" id="BC136693">
    <property type="protein sequence ID" value="AAI36694.1"/>
    <property type="molecule type" value="mRNA"/>
</dbReference>
<dbReference type="EMBL" id="AB058746">
    <property type="protein sequence ID" value="BAB47472.2"/>
    <property type="molecule type" value="mRNA"/>
</dbReference>
<dbReference type="CCDS" id="CCDS2387.2">
    <molecule id="Q8N2C7-7"/>
</dbReference>
<dbReference type="CCDS" id="CCDS46504.1">
    <molecule id="Q8N2C7-1"/>
</dbReference>
<dbReference type="RefSeq" id="NP_115893.1">
    <molecule id="Q8N2C7-1"/>
    <property type="nucleotide sequence ID" value="NM_032504.2"/>
</dbReference>
<dbReference type="RefSeq" id="NP_872393.3">
    <molecule id="Q8N2C7-7"/>
    <property type="nucleotide sequence ID" value="NM_182587.4"/>
</dbReference>
<dbReference type="PDB" id="7SX3">
    <property type="method" value="EM"/>
    <property type="resolution" value="3.10 A"/>
    <property type="chains" value="E=1-3258"/>
</dbReference>
<dbReference type="PDB" id="7SX4">
    <property type="method" value="EM"/>
    <property type="resolution" value="3.50 A"/>
    <property type="chains" value="E=1-3258"/>
</dbReference>
<dbReference type="PDB" id="7WJI">
    <property type="method" value="EM"/>
    <property type="resolution" value="4.50 A"/>
    <property type="chains" value="A=1-3258"/>
</dbReference>
<dbReference type="PDBsum" id="7SX3"/>
<dbReference type="PDBsum" id="7SX4"/>
<dbReference type="PDBsum" id="7WJI"/>
<dbReference type="EMDB" id="EMD-25492"/>
<dbReference type="EMDB" id="EMD-25493"/>
<dbReference type="EMDB" id="EMD-32544"/>
<dbReference type="SMR" id="Q8N2C7"/>
<dbReference type="BioGRID" id="130032">
    <property type="interactions" value="10"/>
</dbReference>
<dbReference type="ComplexPortal" id="CPX-2341">
    <property type="entry name" value="NALCN channelosome complex"/>
</dbReference>
<dbReference type="CORUM" id="Q8N2C7"/>
<dbReference type="FunCoup" id="Q8N2C7">
    <property type="interactions" value="815"/>
</dbReference>
<dbReference type="IntAct" id="Q8N2C7">
    <property type="interactions" value="8"/>
</dbReference>
<dbReference type="MINT" id="Q8N2C7"/>
<dbReference type="STRING" id="9606.ENSP00000391088"/>
<dbReference type="TCDB" id="1.A.1.11.15">
    <property type="family name" value="the voltage-gated ion channel (vic) superfamily"/>
</dbReference>
<dbReference type="GlyGen" id="Q8N2C7">
    <property type="glycosylation" value="2 sites, 1 O-linked glycan (1 site)"/>
</dbReference>
<dbReference type="iPTMnet" id="Q8N2C7"/>
<dbReference type="PhosphoSitePlus" id="Q8N2C7"/>
<dbReference type="BioMuta" id="UNC80"/>
<dbReference type="DMDM" id="226698393"/>
<dbReference type="jPOST" id="Q8N2C7"/>
<dbReference type="MassIVE" id="Q8N2C7"/>
<dbReference type="PaxDb" id="9606-ENSP00000391088"/>
<dbReference type="PeptideAtlas" id="Q8N2C7"/>
<dbReference type="Antibodypedia" id="52283">
    <property type="antibodies" value="63 antibodies from 10 providers"/>
</dbReference>
<dbReference type="DNASU" id="285175"/>
<dbReference type="Ensembl" id="ENST00000272845.10">
    <molecule id="Q8N2C7-7"/>
    <property type="protein sequence ID" value="ENSP00000272845.5"/>
    <property type="gene ID" value="ENSG00000144406.20"/>
</dbReference>
<dbReference type="Ensembl" id="ENST00000439458.5">
    <molecule id="Q8N2C7-1"/>
    <property type="protein sequence ID" value="ENSP00000391088.1"/>
    <property type="gene ID" value="ENSG00000144406.20"/>
</dbReference>
<dbReference type="GeneID" id="285175"/>
<dbReference type="KEGG" id="hsa:285175"/>
<dbReference type="UCSC" id="uc010zjc.1">
    <molecule id="Q8N2C7-1"/>
    <property type="organism name" value="human"/>
</dbReference>
<dbReference type="AGR" id="HGNC:26582"/>
<dbReference type="CTD" id="285175"/>
<dbReference type="DisGeNET" id="285175"/>
<dbReference type="GeneCards" id="UNC80"/>
<dbReference type="GeneReviews" id="UNC80"/>
<dbReference type="HGNC" id="HGNC:26582">
    <property type="gene designation" value="UNC80"/>
</dbReference>
<dbReference type="HPA" id="ENSG00000144406">
    <property type="expression patterns" value="Group enriched (brain, pituitary gland, retina)"/>
</dbReference>
<dbReference type="MalaCards" id="UNC80"/>
<dbReference type="MIM" id="612636">
    <property type="type" value="gene"/>
</dbReference>
<dbReference type="MIM" id="616801">
    <property type="type" value="phenotype"/>
</dbReference>
<dbReference type="neXtProt" id="NX_Q8N2C7"/>
<dbReference type="OpenTargets" id="ENSG00000144406"/>
<dbReference type="Orphanet" id="371364">
    <property type="disease" value="Hypotonia-speech impairment-severe cognitive delay syndrome"/>
</dbReference>
<dbReference type="PharmGKB" id="PA165697705"/>
<dbReference type="VEuPathDB" id="HostDB:ENSG00000144406"/>
<dbReference type="eggNOG" id="ENOG502QSTP">
    <property type="taxonomic scope" value="Eukaryota"/>
</dbReference>
<dbReference type="GeneTree" id="ENSGT00640000091496"/>
<dbReference type="HOGENOM" id="CLU_000495_1_0_1"/>
<dbReference type="InParanoid" id="Q8N2C7"/>
<dbReference type="OrthoDB" id="5584001at2759"/>
<dbReference type="PAN-GO" id="Q8N2C7">
    <property type="GO annotations" value="4 GO annotations based on evolutionary models"/>
</dbReference>
<dbReference type="PhylomeDB" id="Q8N2C7"/>
<dbReference type="TreeFam" id="TF313531"/>
<dbReference type="PathwayCommons" id="Q8N2C7"/>
<dbReference type="Reactome" id="R-HSA-2672351">
    <property type="pathway name" value="Stimuli-sensing channels"/>
</dbReference>
<dbReference type="SignaLink" id="Q8N2C7"/>
<dbReference type="SIGNOR" id="Q8N2C7"/>
<dbReference type="BioGRID-ORCS" id="285175">
    <property type="hits" value="13 hits in 1138 CRISPR screens"/>
</dbReference>
<dbReference type="ChiTaRS" id="UNC80">
    <property type="organism name" value="human"/>
</dbReference>
<dbReference type="GenomeRNAi" id="285175"/>
<dbReference type="Pharos" id="Q8N2C7">
    <property type="development level" value="Tbio"/>
</dbReference>
<dbReference type="PRO" id="PR:Q8N2C7"/>
<dbReference type="Proteomes" id="UP000005640">
    <property type="component" value="Chromosome 2"/>
</dbReference>
<dbReference type="RNAct" id="Q8N2C7">
    <property type="molecule type" value="protein"/>
</dbReference>
<dbReference type="Bgee" id="ENSG00000144406">
    <property type="expression patterns" value="Expressed in cerebellar vermis and 118 other cell types or tissues"/>
</dbReference>
<dbReference type="ExpressionAtlas" id="Q8N2C7">
    <property type="expression patterns" value="baseline and differential"/>
</dbReference>
<dbReference type="GO" id="GO:0030424">
    <property type="term" value="C:axon"/>
    <property type="evidence" value="ECO:0000318"/>
    <property type="project" value="GO_Central"/>
</dbReference>
<dbReference type="GO" id="GO:0034703">
    <property type="term" value="C:cation channel complex"/>
    <property type="evidence" value="ECO:0000318"/>
    <property type="project" value="GO_Central"/>
</dbReference>
<dbReference type="GO" id="GO:0005886">
    <property type="term" value="C:plasma membrane"/>
    <property type="evidence" value="ECO:0000314"/>
    <property type="project" value="UniProtKB"/>
</dbReference>
<dbReference type="GO" id="GO:0005261">
    <property type="term" value="F:monoatomic cation channel activity"/>
    <property type="evidence" value="ECO:0000318"/>
    <property type="project" value="GO_Central"/>
</dbReference>
<dbReference type="GO" id="GO:0055080">
    <property type="term" value="P:monoatomic cation homeostasis"/>
    <property type="evidence" value="ECO:0000318"/>
    <property type="project" value="GO_Central"/>
</dbReference>
<dbReference type="InterPro" id="IPR046460">
    <property type="entry name" value="UNC80_C"/>
</dbReference>
<dbReference type="InterPro" id="IPR045852">
    <property type="entry name" value="UNC80_central"/>
</dbReference>
<dbReference type="InterPro" id="IPR031542">
    <property type="entry name" value="UNC80_N"/>
</dbReference>
<dbReference type="PANTHER" id="PTHR31781:SF1">
    <property type="entry name" value="PROTEIN UNC-80 HOMOLOG"/>
    <property type="match status" value="1"/>
</dbReference>
<dbReference type="PANTHER" id="PTHR31781">
    <property type="entry name" value="UNC80"/>
    <property type="match status" value="1"/>
</dbReference>
<dbReference type="Pfam" id="PF19424">
    <property type="entry name" value="UNC80"/>
    <property type="match status" value="1"/>
</dbReference>
<dbReference type="Pfam" id="PF20262">
    <property type="entry name" value="UNC80_C"/>
    <property type="match status" value="1"/>
</dbReference>
<dbReference type="Pfam" id="PF15778">
    <property type="entry name" value="UNC80_N"/>
    <property type="match status" value="1"/>
</dbReference>